<feature type="chain" id="PRO_0000196401" description="DNA replication and repair protein RecF">
    <location>
        <begin position="1"/>
        <end position="384"/>
    </location>
</feature>
<feature type="binding site" evidence="1">
    <location>
        <begin position="43"/>
        <end position="50"/>
    </location>
    <ligand>
        <name>ATP</name>
        <dbReference type="ChEBI" id="CHEBI:30616"/>
    </ligand>
</feature>
<dbReference type="EMBL" id="AE014291">
    <property type="protein sequence ID" value="AAN28961.1"/>
    <property type="molecule type" value="Genomic_DNA"/>
</dbReference>
<dbReference type="EMBL" id="CP002997">
    <property type="protein sequence ID" value="AEM17373.1"/>
    <property type="molecule type" value="Genomic_DNA"/>
</dbReference>
<dbReference type="RefSeq" id="WP_004691194.1">
    <property type="nucleotide sequence ID" value="NZ_KN046804.1"/>
</dbReference>
<dbReference type="SMR" id="Q8G3E5"/>
<dbReference type="GeneID" id="97534559"/>
<dbReference type="KEGG" id="bms:BR0003"/>
<dbReference type="KEGG" id="bsi:BS1330_I0003"/>
<dbReference type="PATRIC" id="fig|204722.21.peg.619"/>
<dbReference type="HOGENOM" id="CLU_040267_2_0_5"/>
<dbReference type="PhylomeDB" id="Q8G3E5"/>
<dbReference type="Proteomes" id="UP000007104">
    <property type="component" value="Chromosome I"/>
</dbReference>
<dbReference type="GO" id="GO:0005737">
    <property type="term" value="C:cytoplasm"/>
    <property type="evidence" value="ECO:0007669"/>
    <property type="project" value="UniProtKB-SubCell"/>
</dbReference>
<dbReference type="GO" id="GO:0005524">
    <property type="term" value="F:ATP binding"/>
    <property type="evidence" value="ECO:0007669"/>
    <property type="project" value="UniProtKB-UniRule"/>
</dbReference>
<dbReference type="GO" id="GO:0016887">
    <property type="term" value="F:ATP hydrolysis activity"/>
    <property type="evidence" value="ECO:0007669"/>
    <property type="project" value="InterPro"/>
</dbReference>
<dbReference type="GO" id="GO:0003697">
    <property type="term" value="F:single-stranded DNA binding"/>
    <property type="evidence" value="ECO:0007669"/>
    <property type="project" value="UniProtKB-UniRule"/>
</dbReference>
<dbReference type="GO" id="GO:0006260">
    <property type="term" value="P:DNA replication"/>
    <property type="evidence" value="ECO:0007669"/>
    <property type="project" value="UniProtKB-UniRule"/>
</dbReference>
<dbReference type="GO" id="GO:0000731">
    <property type="term" value="P:DNA synthesis involved in DNA repair"/>
    <property type="evidence" value="ECO:0007669"/>
    <property type="project" value="TreeGrafter"/>
</dbReference>
<dbReference type="GO" id="GO:0006302">
    <property type="term" value="P:double-strand break repair"/>
    <property type="evidence" value="ECO:0007669"/>
    <property type="project" value="TreeGrafter"/>
</dbReference>
<dbReference type="GO" id="GO:0009432">
    <property type="term" value="P:SOS response"/>
    <property type="evidence" value="ECO:0007669"/>
    <property type="project" value="UniProtKB-UniRule"/>
</dbReference>
<dbReference type="CDD" id="cd03242">
    <property type="entry name" value="ABC_RecF"/>
    <property type="match status" value="1"/>
</dbReference>
<dbReference type="Gene3D" id="3.40.50.300">
    <property type="entry name" value="P-loop containing nucleotide triphosphate hydrolases"/>
    <property type="match status" value="1"/>
</dbReference>
<dbReference type="Gene3D" id="1.20.1050.90">
    <property type="entry name" value="RecF/RecN/SMC, N-terminal domain"/>
    <property type="match status" value="1"/>
</dbReference>
<dbReference type="HAMAP" id="MF_00365">
    <property type="entry name" value="RecF"/>
    <property type="match status" value="1"/>
</dbReference>
<dbReference type="InterPro" id="IPR003593">
    <property type="entry name" value="AAA+_ATPase"/>
</dbReference>
<dbReference type="InterPro" id="IPR001238">
    <property type="entry name" value="DNA-binding_RecF"/>
</dbReference>
<dbReference type="InterPro" id="IPR018078">
    <property type="entry name" value="DNA-binding_RecF_CS"/>
</dbReference>
<dbReference type="InterPro" id="IPR027417">
    <property type="entry name" value="P-loop_NTPase"/>
</dbReference>
<dbReference type="InterPro" id="IPR003395">
    <property type="entry name" value="RecF/RecN/SMC_N"/>
</dbReference>
<dbReference type="InterPro" id="IPR042174">
    <property type="entry name" value="RecF_2"/>
</dbReference>
<dbReference type="NCBIfam" id="TIGR00611">
    <property type="entry name" value="recf"/>
    <property type="match status" value="1"/>
</dbReference>
<dbReference type="PANTHER" id="PTHR32182">
    <property type="entry name" value="DNA REPLICATION AND REPAIR PROTEIN RECF"/>
    <property type="match status" value="1"/>
</dbReference>
<dbReference type="PANTHER" id="PTHR32182:SF0">
    <property type="entry name" value="DNA REPLICATION AND REPAIR PROTEIN RECF"/>
    <property type="match status" value="1"/>
</dbReference>
<dbReference type="Pfam" id="PF02463">
    <property type="entry name" value="SMC_N"/>
    <property type="match status" value="1"/>
</dbReference>
<dbReference type="SMART" id="SM00382">
    <property type="entry name" value="AAA"/>
    <property type="match status" value="1"/>
</dbReference>
<dbReference type="SUPFAM" id="SSF52540">
    <property type="entry name" value="P-loop containing nucleoside triphosphate hydrolases"/>
    <property type="match status" value="1"/>
</dbReference>
<dbReference type="PROSITE" id="PS00617">
    <property type="entry name" value="RECF_1"/>
    <property type="match status" value="1"/>
</dbReference>
<dbReference type="PROSITE" id="PS00618">
    <property type="entry name" value="RECF_2"/>
    <property type="match status" value="1"/>
</dbReference>
<proteinExistence type="inferred from homology"/>
<reference key="1">
    <citation type="journal article" date="2002" name="Proc. Natl. Acad. Sci. U.S.A.">
        <title>The Brucella suis genome reveals fundamental similarities between animal and plant pathogens and symbionts.</title>
        <authorList>
            <person name="Paulsen I.T."/>
            <person name="Seshadri R."/>
            <person name="Nelson K.E."/>
            <person name="Eisen J.A."/>
            <person name="Heidelberg J.F."/>
            <person name="Read T.D."/>
            <person name="Dodson R.J."/>
            <person name="Umayam L.A."/>
            <person name="Brinkac L.M."/>
            <person name="Beanan M.J."/>
            <person name="Daugherty S.C."/>
            <person name="DeBoy R.T."/>
            <person name="Durkin A.S."/>
            <person name="Kolonay J.F."/>
            <person name="Madupu R."/>
            <person name="Nelson W.C."/>
            <person name="Ayodeji B."/>
            <person name="Kraul M."/>
            <person name="Shetty J."/>
            <person name="Malek J.A."/>
            <person name="Van Aken S.E."/>
            <person name="Riedmuller S."/>
            <person name="Tettelin H."/>
            <person name="Gill S.R."/>
            <person name="White O."/>
            <person name="Salzberg S.L."/>
            <person name="Hoover D.L."/>
            <person name="Lindler L.E."/>
            <person name="Halling S.M."/>
            <person name="Boyle S.M."/>
            <person name="Fraser C.M."/>
        </authorList>
    </citation>
    <scope>NUCLEOTIDE SEQUENCE [LARGE SCALE GENOMIC DNA]</scope>
    <source>
        <strain>1330</strain>
    </source>
</reference>
<reference key="2">
    <citation type="journal article" date="2011" name="J. Bacteriol.">
        <title>Revised genome sequence of Brucella suis 1330.</title>
        <authorList>
            <person name="Tae H."/>
            <person name="Shallom S."/>
            <person name="Settlage R."/>
            <person name="Preston D."/>
            <person name="Adams L.G."/>
            <person name="Garner H.R."/>
        </authorList>
    </citation>
    <scope>NUCLEOTIDE SEQUENCE [LARGE SCALE GENOMIC DNA]</scope>
    <source>
        <strain>1330</strain>
    </source>
</reference>
<name>RECF_BRUSU</name>
<keyword id="KW-0067">ATP-binding</keyword>
<keyword id="KW-0963">Cytoplasm</keyword>
<keyword id="KW-0227">DNA damage</keyword>
<keyword id="KW-0234">DNA repair</keyword>
<keyword id="KW-0235">DNA replication</keyword>
<keyword id="KW-0238">DNA-binding</keyword>
<keyword id="KW-0547">Nucleotide-binding</keyword>
<keyword id="KW-0742">SOS response</keyword>
<comment type="function">
    <text evidence="1">The RecF protein is involved in DNA metabolism; it is required for DNA replication and normal SOS inducibility. RecF binds preferentially to single-stranded, linear DNA. It also seems to bind ATP.</text>
</comment>
<comment type="subcellular location">
    <subcellularLocation>
        <location evidence="1">Cytoplasm</location>
    </subcellularLocation>
</comment>
<comment type="similarity">
    <text evidence="1">Belongs to the RecF family.</text>
</comment>
<sequence>MEAKDHIERRPDRVSIRRLKLVNFRNYAELSLPLGPGHVVLTGENGSGKTNLIEAISFLSPGRGLRRAAYDDVARANAEGGFAIHAALDCMIYGDAEIGTGTAGGGEGGRKVRINGIAASADDLLDYARILWVVPSMDGLFTGGASDRRRFLDRMVLAIDTAHGKRVLDYEKAMRSRNRLLNDGSNDDQWLDAIENQMAELGTAIAAARAQAMRLIAAMIERLPAEGPFPKADCFLEGALESRIGVEAALDLEEDFRRTLRDGRARDRAAGRTLDGPHRTDLIVQHRPKSMPAALCSTGEQKALLIGLILAHARLTAELSGMAPILLLDEIAAHLDMGRRAALFGILDELGGQAFMTGTDRALFDALAGDAQFFNVSAGQLTGI</sequence>
<evidence type="ECO:0000255" key="1">
    <source>
        <dbReference type="HAMAP-Rule" id="MF_00365"/>
    </source>
</evidence>
<organism>
    <name type="scientific">Brucella suis biovar 1 (strain 1330)</name>
    <dbReference type="NCBI Taxonomy" id="204722"/>
    <lineage>
        <taxon>Bacteria</taxon>
        <taxon>Pseudomonadati</taxon>
        <taxon>Pseudomonadota</taxon>
        <taxon>Alphaproteobacteria</taxon>
        <taxon>Hyphomicrobiales</taxon>
        <taxon>Brucellaceae</taxon>
        <taxon>Brucella/Ochrobactrum group</taxon>
        <taxon>Brucella</taxon>
    </lineage>
</organism>
<protein>
    <recommendedName>
        <fullName evidence="1">DNA replication and repair protein RecF</fullName>
    </recommendedName>
</protein>
<gene>
    <name evidence="1" type="primary">recF</name>
    <name type="ordered locus">BR0003</name>
    <name type="ordered locus">BS1330_I0003</name>
</gene>
<accession>Q8G3E5</accession>
<accession>G0KAH6</accession>